<gene>
    <name evidence="1" type="primary">thiI</name>
    <name type="ordered locus">VSAL_I0938</name>
</gene>
<sequence length="482" mass="54455">MKFIVKPHPEVFVKSDSVRKRFIRILETNLRSIIQRDTKGVEVINRRDYIEVSGLDGTYRNQVLTAVTHTPGIHHTLEVKQTAFADMHDIYEQCLEMNREIIEGKTFCVRVKRRGTHPFTSIELERYVGGGLNQAVESAKVKLKNPDVTVKFEVENEKLNLVIARHKGLGGFPLGTQEDVLSLISGGFDSGVSSYLHIKRGSKVHYMFFNLGGPAHEIGVKQVSHFLWKKYGSSAKVKFIAVDFEPVVAEILEKVDDGQMGVILKRMFMRAGGMVAEKLGIQGMVTGEALGQVSSQTLTNLRHIDNVTDTLILRPLINWDKEDIINVARDIGTEDFAKTMPEYCGVISKKPTIKAEKLKLEKEEAKFDFSILDQVIYDARVMDIRAIEKESQEQAPEVEMVSELGSDVVVLDIRSAEEEDESPLIIEGVEVKHLPFFRIATQFGDLDQSKEYLLYCDHGVMSRLQALLLIENGYKNVKVYRP</sequence>
<protein>
    <recommendedName>
        <fullName evidence="1">tRNA sulfurtransferase</fullName>
        <ecNumber evidence="1">2.8.1.4</ecNumber>
    </recommendedName>
    <alternativeName>
        <fullName evidence="1">Sulfur carrier protein ThiS sulfurtransferase</fullName>
    </alternativeName>
    <alternativeName>
        <fullName evidence="1">Thiamine biosynthesis protein ThiI</fullName>
    </alternativeName>
    <alternativeName>
        <fullName evidence="1">tRNA 4-thiouridine synthase</fullName>
    </alternativeName>
</protein>
<dbReference type="EC" id="2.8.1.4" evidence="1"/>
<dbReference type="EMBL" id="FM178379">
    <property type="protein sequence ID" value="CAQ78623.1"/>
    <property type="molecule type" value="Genomic_DNA"/>
</dbReference>
<dbReference type="RefSeq" id="WP_012549709.1">
    <property type="nucleotide sequence ID" value="NC_011312.1"/>
</dbReference>
<dbReference type="SMR" id="B6EIB2"/>
<dbReference type="KEGG" id="vsa:VSAL_I0938"/>
<dbReference type="eggNOG" id="COG0301">
    <property type="taxonomic scope" value="Bacteria"/>
</dbReference>
<dbReference type="eggNOG" id="COG0607">
    <property type="taxonomic scope" value="Bacteria"/>
</dbReference>
<dbReference type="HOGENOM" id="CLU_037952_4_1_6"/>
<dbReference type="UniPathway" id="UPA00060"/>
<dbReference type="Proteomes" id="UP000001730">
    <property type="component" value="Chromosome 1"/>
</dbReference>
<dbReference type="GO" id="GO:0005829">
    <property type="term" value="C:cytosol"/>
    <property type="evidence" value="ECO:0007669"/>
    <property type="project" value="TreeGrafter"/>
</dbReference>
<dbReference type="GO" id="GO:0005524">
    <property type="term" value="F:ATP binding"/>
    <property type="evidence" value="ECO:0007669"/>
    <property type="project" value="UniProtKB-UniRule"/>
</dbReference>
<dbReference type="GO" id="GO:0004810">
    <property type="term" value="F:CCA tRNA nucleotidyltransferase activity"/>
    <property type="evidence" value="ECO:0007669"/>
    <property type="project" value="InterPro"/>
</dbReference>
<dbReference type="GO" id="GO:0000049">
    <property type="term" value="F:tRNA binding"/>
    <property type="evidence" value="ECO:0007669"/>
    <property type="project" value="UniProtKB-UniRule"/>
</dbReference>
<dbReference type="GO" id="GO:0140741">
    <property type="term" value="F:tRNA-uracil-4 sulfurtransferase activity"/>
    <property type="evidence" value="ECO:0007669"/>
    <property type="project" value="UniProtKB-EC"/>
</dbReference>
<dbReference type="GO" id="GO:0009228">
    <property type="term" value="P:thiamine biosynthetic process"/>
    <property type="evidence" value="ECO:0007669"/>
    <property type="project" value="UniProtKB-KW"/>
</dbReference>
<dbReference type="GO" id="GO:0009229">
    <property type="term" value="P:thiamine diphosphate biosynthetic process"/>
    <property type="evidence" value="ECO:0007669"/>
    <property type="project" value="UniProtKB-UniRule"/>
</dbReference>
<dbReference type="GO" id="GO:0052837">
    <property type="term" value="P:thiazole biosynthetic process"/>
    <property type="evidence" value="ECO:0007669"/>
    <property type="project" value="InterPro"/>
</dbReference>
<dbReference type="GO" id="GO:0002937">
    <property type="term" value="P:tRNA 4-thiouridine biosynthesis"/>
    <property type="evidence" value="ECO:0007669"/>
    <property type="project" value="TreeGrafter"/>
</dbReference>
<dbReference type="CDD" id="cd01712">
    <property type="entry name" value="PPase_ThiI"/>
    <property type="match status" value="1"/>
</dbReference>
<dbReference type="CDD" id="cd00158">
    <property type="entry name" value="RHOD"/>
    <property type="match status" value="1"/>
</dbReference>
<dbReference type="CDD" id="cd11716">
    <property type="entry name" value="THUMP_ThiI"/>
    <property type="match status" value="1"/>
</dbReference>
<dbReference type="FunFam" id="3.40.50.620:FF:000029">
    <property type="entry name" value="tRNA sulfurtransferase"/>
    <property type="match status" value="1"/>
</dbReference>
<dbReference type="Gene3D" id="3.30.2130.30">
    <property type="match status" value="1"/>
</dbReference>
<dbReference type="Gene3D" id="3.40.50.620">
    <property type="entry name" value="HUPs"/>
    <property type="match status" value="1"/>
</dbReference>
<dbReference type="Gene3D" id="3.40.250.10">
    <property type="entry name" value="Rhodanese-like domain"/>
    <property type="match status" value="1"/>
</dbReference>
<dbReference type="HAMAP" id="MF_00021">
    <property type="entry name" value="ThiI"/>
    <property type="match status" value="1"/>
</dbReference>
<dbReference type="InterPro" id="IPR001763">
    <property type="entry name" value="Rhodanese-like_dom"/>
</dbReference>
<dbReference type="InterPro" id="IPR036873">
    <property type="entry name" value="Rhodanese-like_dom_sf"/>
</dbReference>
<dbReference type="InterPro" id="IPR014729">
    <property type="entry name" value="Rossmann-like_a/b/a_fold"/>
</dbReference>
<dbReference type="InterPro" id="IPR020536">
    <property type="entry name" value="ThiI_AANH"/>
</dbReference>
<dbReference type="InterPro" id="IPR049961">
    <property type="entry name" value="ThiI_N"/>
</dbReference>
<dbReference type="InterPro" id="IPR026340">
    <property type="entry name" value="THII_Thiazole_biosynth_dom"/>
</dbReference>
<dbReference type="InterPro" id="IPR004114">
    <property type="entry name" value="THUMP_dom"/>
</dbReference>
<dbReference type="InterPro" id="IPR049962">
    <property type="entry name" value="THUMP_ThiI"/>
</dbReference>
<dbReference type="InterPro" id="IPR003720">
    <property type="entry name" value="tRNA_STrfase"/>
</dbReference>
<dbReference type="InterPro" id="IPR050102">
    <property type="entry name" value="tRNA_sulfurtransferase_ThiI"/>
</dbReference>
<dbReference type="NCBIfam" id="TIGR04271">
    <property type="entry name" value="ThiI_C_thiazole"/>
    <property type="match status" value="1"/>
</dbReference>
<dbReference type="NCBIfam" id="TIGR00342">
    <property type="entry name" value="tRNA uracil 4-sulfurtransferase ThiI"/>
    <property type="match status" value="1"/>
</dbReference>
<dbReference type="PANTHER" id="PTHR43209">
    <property type="entry name" value="TRNA SULFURTRANSFERASE"/>
    <property type="match status" value="1"/>
</dbReference>
<dbReference type="PANTHER" id="PTHR43209:SF1">
    <property type="entry name" value="TRNA SULFURTRANSFERASE"/>
    <property type="match status" value="1"/>
</dbReference>
<dbReference type="Pfam" id="PF00581">
    <property type="entry name" value="Rhodanese"/>
    <property type="match status" value="1"/>
</dbReference>
<dbReference type="Pfam" id="PF02568">
    <property type="entry name" value="ThiI"/>
    <property type="match status" value="1"/>
</dbReference>
<dbReference type="Pfam" id="PF02926">
    <property type="entry name" value="THUMP"/>
    <property type="match status" value="1"/>
</dbReference>
<dbReference type="SMART" id="SM00981">
    <property type="entry name" value="THUMP"/>
    <property type="match status" value="1"/>
</dbReference>
<dbReference type="SUPFAM" id="SSF52402">
    <property type="entry name" value="Adenine nucleotide alpha hydrolases-like"/>
    <property type="match status" value="1"/>
</dbReference>
<dbReference type="SUPFAM" id="SSF52821">
    <property type="entry name" value="Rhodanese/Cell cycle control phosphatase"/>
    <property type="match status" value="1"/>
</dbReference>
<dbReference type="SUPFAM" id="SSF143437">
    <property type="entry name" value="THUMP domain-like"/>
    <property type="match status" value="1"/>
</dbReference>
<dbReference type="PROSITE" id="PS50206">
    <property type="entry name" value="RHODANESE_3"/>
    <property type="match status" value="1"/>
</dbReference>
<dbReference type="PROSITE" id="PS51165">
    <property type="entry name" value="THUMP"/>
    <property type="match status" value="1"/>
</dbReference>
<keyword id="KW-0067">ATP-binding</keyword>
<keyword id="KW-0963">Cytoplasm</keyword>
<keyword id="KW-1015">Disulfide bond</keyword>
<keyword id="KW-0547">Nucleotide-binding</keyword>
<keyword id="KW-0676">Redox-active center</keyword>
<keyword id="KW-0694">RNA-binding</keyword>
<keyword id="KW-0784">Thiamine biosynthesis</keyword>
<keyword id="KW-0808">Transferase</keyword>
<keyword id="KW-0820">tRNA-binding</keyword>
<reference key="1">
    <citation type="journal article" date="2008" name="BMC Genomics">
        <title>The genome sequence of the fish pathogen Aliivibrio salmonicida strain LFI1238 shows extensive evidence of gene decay.</title>
        <authorList>
            <person name="Hjerde E."/>
            <person name="Lorentzen M.S."/>
            <person name="Holden M.T."/>
            <person name="Seeger K."/>
            <person name="Paulsen S."/>
            <person name="Bason N."/>
            <person name="Churcher C."/>
            <person name="Harris D."/>
            <person name="Norbertczak H."/>
            <person name="Quail M.A."/>
            <person name="Sanders S."/>
            <person name="Thurston S."/>
            <person name="Parkhill J."/>
            <person name="Willassen N.P."/>
            <person name="Thomson N.R."/>
        </authorList>
    </citation>
    <scope>NUCLEOTIDE SEQUENCE [LARGE SCALE GENOMIC DNA]</scope>
    <source>
        <strain>LFI1238</strain>
    </source>
</reference>
<feature type="chain" id="PRO_1000090009" description="tRNA sulfurtransferase">
    <location>
        <begin position="1"/>
        <end position="482"/>
    </location>
</feature>
<feature type="domain" description="THUMP" evidence="1">
    <location>
        <begin position="61"/>
        <end position="165"/>
    </location>
</feature>
<feature type="domain" description="Rhodanese" evidence="1">
    <location>
        <begin position="404"/>
        <end position="482"/>
    </location>
</feature>
<feature type="active site" description="Cysteine persulfide intermediate" evidence="1">
    <location>
        <position position="456"/>
    </location>
</feature>
<feature type="binding site" evidence="1">
    <location>
        <begin position="183"/>
        <end position="184"/>
    </location>
    <ligand>
        <name>ATP</name>
        <dbReference type="ChEBI" id="CHEBI:30616"/>
    </ligand>
</feature>
<feature type="binding site" evidence="1">
    <location>
        <position position="265"/>
    </location>
    <ligand>
        <name>ATP</name>
        <dbReference type="ChEBI" id="CHEBI:30616"/>
    </ligand>
</feature>
<feature type="binding site" evidence="1">
    <location>
        <position position="287"/>
    </location>
    <ligand>
        <name>ATP</name>
        <dbReference type="ChEBI" id="CHEBI:30616"/>
    </ligand>
</feature>
<feature type="binding site" evidence="1">
    <location>
        <position position="296"/>
    </location>
    <ligand>
        <name>ATP</name>
        <dbReference type="ChEBI" id="CHEBI:30616"/>
    </ligand>
</feature>
<feature type="disulfide bond" description="Redox-active" evidence="1">
    <location>
        <begin position="344"/>
        <end position="456"/>
    </location>
</feature>
<accession>B6EIB2</accession>
<organism>
    <name type="scientific">Aliivibrio salmonicida (strain LFI1238)</name>
    <name type="common">Vibrio salmonicida (strain LFI1238)</name>
    <dbReference type="NCBI Taxonomy" id="316275"/>
    <lineage>
        <taxon>Bacteria</taxon>
        <taxon>Pseudomonadati</taxon>
        <taxon>Pseudomonadota</taxon>
        <taxon>Gammaproteobacteria</taxon>
        <taxon>Vibrionales</taxon>
        <taxon>Vibrionaceae</taxon>
        <taxon>Aliivibrio</taxon>
    </lineage>
</organism>
<name>THII_ALISL</name>
<comment type="function">
    <text evidence="1">Catalyzes the ATP-dependent transfer of a sulfur to tRNA to produce 4-thiouridine in position 8 of tRNAs, which functions as a near-UV photosensor. Also catalyzes the transfer of sulfur to the sulfur carrier protein ThiS, forming ThiS-thiocarboxylate. This is a step in the synthesis of thiazole, in the thiamine biosynthesis pathway. The sulfur is donated as persulfide by IscS.</text>
</comment>
<comment type="catalytic activity">
    <reaction evidence="1">
        <text>[ThiI sulfur-carrier protein]-S-sulfanyl-L-cysteine + a uridine in tRNA + 2 reduced [2Fe-2S]-[ferredoxin] + ATP + H(+) = [ThiI sulfur-carrier protein]-L-cysteine + a 4-thiouridine in tRNA + 2 oxidized [2Fe-2S]-[ferredoxin] + AMP + diphosphate</text>
        <dbReference type="Rhea" id="RHEA:24176"/>
        <dbReference type="Rhea" id="RHEA-COMP:10000"/>
        <dbReference type="Rhea" id="RHEA-COMP:10001"/>
        <dbReference type="Rhea" id="RHEA-COMP:13337"/>
        <dbReference type="Rhea" id="RHEA-COMP:13338"/>
        <dbReference type="Rhea" id="RHEA-COMP:13339"/>
        <dbReference type="Rhea" id="RHEA-COMP:13340"/>
        <dbReference type="ChEBI" id="CHEBI:15378"/>
        <dbReference type="ChEBI" id="CHEBI:29950"/>
        <dbReference type="ChEBI" id="CHEBI:30616"/>
        <dbReference type="ChEBI" id="CHEBI:33019"/>
        <dbReference type="ChEBI" id="CHEBI:33737"/>
        <dbReference type="ChEBI" id="CHEBI:33738"/>
        <dbReference type="ChEBI" id="CHEBI:61963"/>
        <dbReference type="ChEBI" id="CHEBI:65315"/>
        <dbReference type="ChEBI" id="CHEBI:136798"/>
        <dbReference type="ChEBI" id="CHEBI:456215"/>
        <dbReference type="EC" id="2.8.1.4"/>
    </reaction>
</comment>
<comment type="catalytic activity">
    <reaction evidence="1">
        <text>[ThiS sulfur-carrier protein]-C-terminal Gly-Gly-AMP + S-sulfanyl-L-cysteinyl-[cysteine desulfurase] + AH2 = [ThiS sulfur-carrier protein]-C-terminal-Gly-aminoethanethioate + L-cysteinyl-[cysteine desulfurase] + A + AMP + 2 H(+)</text>
        <dbReference type="Rhea" id="RHEA:43340"/>
        <dbReference type="Rhea" id="RHEA-COMP:12157"/>
        <dbReference type="Rhea" id="RHEA-COMP:12158"/>
        <dbReference type="Rhea" id="RHEA-COMP:12910"/>
        <dbReference type="Rhea" id="RHEA-COMP:19908"/>
        <dbReference type="ChEBI" id="CHEBI:13193"/>
        <dbReference type="ChEBI" id="CHEBI:15378"/>
        <dbReference type="ChEBI" id="CHEBI:17499"/>
        <dbReference type="ChEBI" id="CHEBI:29950"/>
        <dbReference type="ChEBI" id="CHEBI:61963"/>
        <dbReference type="ChEBI" id="CHEBI:90618"/>
        <dbReference type="ChEBI" id="CHEBI:232372"/>
        <dbReference type="ChEBI" id="CHEBI:456215"/>
    </reaction>
</comment>
<comment type="pathway">
    <text evidence="1">Cofactor biosynthesis; thiamine diphosphate biosynthesis.</text>
</comment>
<comment type="subcellular location">
    <subcellularLocation>
        <location evidence="1">Cytoplasm</location>
    </subcellularLocation>
</comment>
<comment type="similarity">
    <text evidence="1">Belongs to the ThiI family.</text>
</comment>
<proteinExistence type="inferred from homology"/>
<evidence type="ECO:0000255" key="1">
    <source>
        <dbReference type="HAMAP-Rule" id="MF_00021"/>
    </source>
</evidence>